<gene>
    <name type="primary">Ccl3</name>
    <name type="synonym">Mip1a</name>
    <name type="synonym">Scya3</name>
</gene>
<accession>P50229</accession>
<accession>A1EC87</accession>
<protein>
    <recommendedName>
        <fullName>C-C motif chemokine 3</fullName>
    </recommendedName>
    <alternativeName>
        <fullName>Macrophage inflammatory protein 1-alpha</fullName>
        <shortName>MIP-1-alpha</shortName>
    </alternativeName>
    <alternativeName>
        <fullName>Small-inducible cytokine A3</fullName>
    </alternativeName>
</protein>
<comment type="function">
    <text evidence="1">Monokine with inflammatory and chemokinetic properties. Binds to CCR1, CCR4 and CCR5. One of the major HIV-suppressive factors produced by CD8+ T-cells. Recombinant MIP-1-alpha induces a dose-dependent inhibition of different strains of HIV-1, HIV-2, and simian immunodeficiency virus (SIV).</text>
</comment>
<comment type="subunit">
    <text evidence="1">Self-associates. Also heterodimer of MIP-1-alpha(4-69) and MIP-1-beta(3-69). Interacts with CCR1.</text>
</comment>
<comment type="subcellular location">
    <subcellularLocation>
        <location>Secreted</location>
    </subcellularLocation>
</comment>
<comment type="induction">
    <text>By lipopolysaccharide (LPS).</text>
</comment>
<comment type="similarity">
    <text evidence="3">Belongs to the intercrine beta (chemokine CC) family.</text>
</comment>
<name>CCL3_RAT</name>
<proteinExistence type="evidence at protein level"/>
<dbReference type="EMBL" id="U22414">
    <property type="protein sequence ID" value="AAA80608.1"/>
    <property type="molecule type" value="mRNA"/>
</dbReference>
<dbReference type="EMBL" id="U06435">
    <property type="protein sequence ID" value="AAA96498.1"/>
    <property type="molecule type" value="mRNA"/>
</dbReference>
<dbReference type="EMBL" id="EF121994">
    <property type="protein sequence ID" value="ABL63433.1"/>
    <property type="molecule type" value="mRNA"/>
</dbReference>
<dbReference type="EMBL" id="EF121995">
    <property type="protein sequence ID" value="ABL63434.1"/>
    <property type="molecule type" value="mRNA"/>
</dbReference>
<dbReference type="PIR" id="I52322">
    <property type="entry name" value="I52322"/>
</dbReference>
<dbReference type="RefSeq" id="NP_037157.2">
    <property type="nucleotide sequence ID" value="NM_013025.2"/>
</dbReference>
<dbReference type="SMR" id="P50229"/>
<dbReference type="FunCoup" id="P50229">
    <property type="interactions" value="244"/>
</dbReference>
<dbReference type="STRING" id="10116.ENSRNOP00000015139"/>
<dbReference type="PaxDb" id="10116-ENSRNOP00000015139"/>
<dbReference type="Ensembl" id="ENSRNOT00000015139.4">
    <property type="protein sequence ID" value="ENSRNOP00000015139.1"/>
    <property type="gene ID" value="ENSRNOG00000011205.4"/>
</dbReference>
<dbReference type="GeneID" id="25542"/>
<dbReference type="KEGG" id="rno:25542"/>
<dbReference type="AGR" id="RGD:3647"/>
<dbReference type="CTD" id="6348"/>
<dbReference type="RGD" id="3647">
    <property type="gene designation" value="Ccl3"/>
</dbReference>
<dbReference type="eggNOG" id="ENOG502SAF0">
    <property type="taxonomic scope" value="Eukaryota"/>
</dbReference>
<dbReference type="GeneTree" id="ENSGT01100000263482"/>
<dbReference type="HOGENOM" id="CLU_141716_4_0_1"/>
<dbReference type="InParanoid" id="P50229"/>
<dbReference type="OMA" id="WVQALLE"/>
<dbReference type="OrthoDB" id="8934837at2759"/>
<dbReference type="PhylomeDB" id="P50229"/>
<dbReference type="TreeFam" id="TF334888"/>
<dbReference type="Reactome" id="R-RNO-380108">
    <property type="pathway name" value="Chemokine receptors bind chemokines"/>
</dbReference>
<dbReference type="PRO" id="PR:P50229"/>
<dbReference type="Proteomes" id="UP000002494">
    <property type="component" value="Chromosome 10"/>
</dbReference>
<dbReference type="Bgee" id="ENSRNOG00000011205">
    <property type="expression patterns" value="Expressed in thymus and 15 other cell types or tissues"/>
</dbReference>
<dbReference type="GO" id="GO:0005737">
    <property type="term" value="C:cytoplasm"/>
    <property type="evidence" value="ECO:0000250"/>
    <property type="project" value="UniProtKB"/>
</dbReference>
<dbReference type="GO" id="GO:0005829">
    <property type="term" value="C:cytosol"/>
    <property type="evidence" value="ECO:0000250"/>
    <property type="project" value="UniProtKB"/>
</dbReference>
<dbReference type="GO" id="GO:0005576">
    <property type="term" value="C:extracellular region"/>
    <property type="evidence" value="ECO:0000266"/>
    <property type="project" value="RGD"/>
</dbReference>
<dbReference type="GO" id="GO:0005615">
    <property type="term" value="C:extracellular space"/>
    <property type="evidence" value="ECO:0000250"/>
    <property type="project" value="UniProtKB"/>
</dbReference>
<dbReference type="GO" id="GO:0048020">
    <property type="term" value="F:CCR chemokine receptor binding"/>
    <property type="evidence" value="ECO:0000318"/>
    <property type="project" value="GO_Central"/>
</dbReference>
<dbReference type="GO" id="GO:0031726">
    <property type="term" value="F:CCR1 chemokine receptor binding"/>
    <property type="evidence" value="ECO:0000266"/>
    <property type="project" value="RGD"/>
</dbReference>
<dbReference type="GO" id="GO:0031730">
    <property type="term" value="F:CCR5 chemokine receptor binding"/>
    <property type="evidence" value="ECO:0000266"/>
    <property type="project" value="RGD"/>
</dbReference>
<dbReference type="GO" id="GO:0042056">
    <property type="term" value="F:chemoattractant activity"/>
    <property type="evidence" value="ECO:0000250"/>
    <property type="project" value="UniProtKB"/>
</dbReference>
<dbReference type="GO" id="GO:0008009">
    <property type="term" value="F:chemokine activity"/>
    <property type="evidence" value="ECO:0000314"/>
    <property type="project" value="RGD"/>
</dbReference>
<dbReference type="GO" id="GO:0008201">
    <property type="term" value="F:heparin binding"/>
    <property type="evidence" value="ECO:0007669"/>
    <property type="project" value="UniProtKB-KW"/>
</dbReference>
<dbReference type="GO" id="GO:0042802">
    <property type="term" value="F:identical protein binding"/>
    <property type="evidence" value="ECO:0000266"/>
    <property type="project" value="RGD"/>
</dbReference>
<dbReference type="GO" id="GO:0016301">
    <property type="term" value="F:kinase activity"/>
    <property type="evidence" value="ECO:0000250"/>
    <property type="project" value="UniProtKB"/>
</dbReference>
<dbReference type="GO" id="GO:0016004">
    <property type="term" value="F:phospholipase activator activity"/>
    <property type="evidence" value="ECO:0000250"/>
    <property type="project" value="UniProtKB"/>
</dbReference>
<dbReference type="GO" id="GO:0004672">
    <property type="term" value="F:protein kinase activity"/>
    <property type="evidence" value="ECO:0000250"/>
    <property type="project" value="UniProtKB"/>
</dbReference>
<dbReference type="GO" id="GO:0061844">
    <property type="term" value="P:antimicrobial humoral immune response mediated by antimicrobial peptide"/>
    <property type="evidence" value="ECO:0000318"/>
    <property type="project" value="GO_Central"/>
</dbReference>
<dbReference type="GO" id="GO:0043615">
    <property type="term" value="P:astrocyte cell migration"/>
    <property type="evidence" value="ECO:0000250"/>
    <property type="project" value="UniProtKB"/>
</dbReference>
<dbReference type="GO" id="GO:0006816">
    <property type="term" value="P:calcium ion transport"/>
    <property type="evidence" value="ECO:0000250"/>
    <property type="project" value="UniProtKB"/>
</dbReference>
<dbReference type="GO" id="GO:0019722">
    <property type="term" value="P:calcium-mediated signaling"/>
    <property type="evidence" value="ECO:0000250"/>
    <property type="project" value="UniProtKB"/>
</dbReference>
<dbReference type="GO" id="GO:0001775">
    <property type="term" value="P:cell activation"/>
    <property type="evidence" value="ECO:0000250"/>
    <property type="project" value="UniProtKB"/>
</dbReference>
<dbReference type="GO" id="GO:0060326">
    <property type="term" value="P:cell chemotaxis"/>
    <property type="evidence" value="ECO:0000318"/>
    <property type="project" value="GO_Central"/>
</dbReference>
<dbReference type="GO" id="GO:0007267">
    <property type="term" value="P:cell-cell signaling"/>
    <property type="evidence" value="ECO:0000250"/>
    <property type="project" value="UniProtKB"/>
</dbReference>
<dbReference type="GO" id="GO:0071347">
    <property type="term" value="P:cellular response to interleukin-1"/>
    <property type="evidence" value="ECO:0000266"/>
    <property type="project" value="RGD"/>
</dbReference>
<dbReference type="GO" id="GO:0071356">
    <property type="term" value="P:cellular response to tumor necrosis factor"/>
    <property type="evidence" value="ECO:0000266"/>
    <property type="project" value="RGD"/>
</dbReference>
<dbReference type="GO" id="GO:0071346">
    <property type="term" value="P:cellular response to type II interferon"/>
    <property type="evidence" value="ECO:0000266"/>
    <property type="project" value="RGD"/>
</dbReference>
<dbReference type="GO" id="GO:0070098">
    <property type="term" value="P:chemokine-mediated signaling pathway"/>
    <property type="evidence" value="ECO:0000318"/>
    <property type="project" value="GO_Central"/>
</dbReference>
<dbReference type="GO" id="GO:0006935">
    <property type="term" value="P:chemotaxis"/>
    <property type="evidence" value="ECO:0000250"/>
    <property type="project" value="UniProtKB"/>
</dbReference>
<dbReference type="GO" id="GO:0007010">
    <property type="term" value="P:cytoskeleton organization"/>
    <property type="evidence" value="ECO:0000250"/>
    <property type="project" value="UniProtKB"/>
</dbReference>
<dbReference type="GO" id="GO:0048245">
    <property type="term" value="P:eosinophil chemotaxis"/>
    <property type="evidence" value="ECO:0000250"/>
    <property type="project" value="UniProtKB"/>
</dbReference>
<dbReference type="GO" id="GO:0043308">
    <property type="term" value="P:eosinophil degranulation"/>
    <property type="evidence" value="ECO:0000250"/>
    <property type="project" value="UniProtKB"/>
</dbReference>
<dbReference type="GO" id="GO:0006887">
    <property type="term" value="P:exocytosis"/>
    <property type="evidence" value="ECO:0000250"/>
    <property type="project" value="UniProtKB"/>
</dbReference>
<dbReference type="GO" id="GO:0071621">
    <property type="term" value="P:granulocyte chemotaxis"/>
    <property type="evidence" value="ECO:0000250"/>
    <property type="project" value="UniProtKB"/>
</dbReference>
<dbReference type="GO" id="GO:0006954">
    <property type="term" value="P:inflammatory response"/>
    <property type="evidence" value="ECO:0000266"/>
    <property type="project" value="RGD"/>
</dbReference>
<dbReference type="GO" id="GO:0006874">
    <property type="term" value="P:intracellular calcium ion homeostasis"/>
    <property type="evidence" value="ECO:0000250"/>
    <property type="project" value="UniProtKB"/>
</dbReference>
<dbReference type="GO" id="GO:0030595">
    <property type="term" value="P:leukocyte chemotaxis"/>
    <property type="evidence" value="ECO:0000314"/>
    <property type="project" value="RGD"/>
</dbReference>
<dbReference type="GO" id="GO:0048247">
    <property type="term" value="P:lymphocyte chemotaxis"/>
    <property type="evidence" value="ECO:0000250"/>
    <property type="project" value="UniProtKB"/>
</dbReference>
<dbReference type="GO" id="GO:0048246">
    <property type="term" value="P:macrophage chemotaxis"/>
    <property type="evidence" value="ECO:0000250"/>
    <property type="project" value="UniProtKB"/>
</dbReference>
<dbReference type="GO" id="GO:0000165">
    <property type="term" value="P:MAPK cascade"/>
    <property type="evidence" value="ECO:0000266"/>
    <property type="project" value="RGD"/>
</dbReference>
<dbReference type="GO" id="GO:0002548">
    <property type="term" value="P:monocyte chemotaxis"/>
    <property type="evidence" value="ECO:0000250"/>
    <property type="project" value="UniProtKB"/>
</dbReference>
<dbReference type="GO" id="GO:0043922">
    <property type="term" value="P:negative regulation by host of viral transcription"/>
    <property type="evidence" value="ECO:0000250"/>
    <property type="project" value="UniProtKB"/>
</dbReference>
<dbReference type="GO" id="GO:0030502">
    <property type="term" value="P:negative regulation of bone mineralization"/>
    <property type="evidence" value="ECO:0000266"/>
    <property type="project" value="RGD"/>
</dbReference>
<dbReference type="GO" id="GO:0010629">
    <property type="term" value="P:negative regulation of gene expression"/>
    <property type="evidence" value="ECO:0000250"/>
    <property type="project" value="UniProtKB"/>
</dbReference>
<dbReference type="GO" id="GO:0045671">
    <property type="term" value="P:negative regulation of osteoclast differentiation"/>
    <property type="evidence" value="ECO:0000250"/>
    <property type="project" value="UniProtKB"/>
</dbReference>
<dbReference type="GO" id="GO:0030593">
    <property type="term" value="P:neutrophil chemotaxis"/>
    <property type="evidence" value="ECO:0000314"/>
    <property type="project" value="RGD"/>
</dbReference>
<dbReference type="GO" id="GO:0001649">
    <property type="term" value="P:osteoblast differentiation"/>
    <property type="evidence" value="ECO:0000250"/>
    <property type="project" value="UniProtKB"/>
</dbReference>
<dbReference type="GO" id="GO:0051928">
    <property type="term" value="P:positive regulation of calcium ion transport"/>
    <property type="evidence" value="ECO:0000250"/>
    <property type="project" value="UniProtKB"/>
</dbReference>
<dbReference type="GO" id="GO:0050850">
    <property type="term" value="P:positive regulation of calcium-mediated signaling"/>
    <property type="evidence" value="ECO:0000250"/>
    <property type="project" value="UniProtKB"/>
</dbReference>
<dbReference type="GO" id="GO:0030335">
    <property type="term" value="P:positive regulation of cell migration"/>
    <property type="evidence" value="ECO:0000250"/>
    <property type="project" value="UniProtKB"/>
</dbReference>
<dbReference type="GO" id="GO:0007204">
    <property type="term" value="P:positive regulation of cytosolic calcium ion concentration"/>
    <property type="evidence" value="ECO:0000314"/>
    <property type="project" value="RGD"/>
</dbReference>
<dbReference type="GO" id="GO:0070374">
    <property type="term" value="P:positive regulation of ERK1 and ERK2 cascade"/>
    <property type="evidence" value="ECO:0000250"/>
    <property type="project" value="UniProtKB"/>
</dbReference>
<dbReference type="GO" id="GO:0010628">
    <property type="term" value="P:positive regulation of gene expression"/>
    <property type="evidence" value="ECO:0000250"/>
    <property type="project" value="UniProtKB"/>
</dbReference>
<dbReference type="GO" id="GO:0050729">
    <property type="term" value="P:positive regulation of inflammatory response"/>
    <property type="evidence" value="ECO:0000250"/>
    <property type="project" value="UniProtKB"/>
</dbReference>
<dbReference type="GO" id="GO:0032731">
    <property type="term" value="P:positive regulation of interleukin-1 beta production"/>
    <property type="evidence" value="ECO:0000250"/>
    <property type="project" value="UniProtKB"/>
</dbReference>
<dbReference type="GO" id="GO:2000503">
    <property type="term" value="P:positive regulation of natural killer cell chemotaxis"/>
    <property type="evidence" value="ECO:0000250"/>
    <property type="project" value="UniProtKB"/>
</dbReference>
<dbReference type="GO" id="GO:0043525">
    <property type="term" value="P:positive regulation of neuron apoptotic process"/>
    <property type="evidence" value="ECO:0000250"/>
    <property type="project" value="UniProtKB"/>
</dbReference>
<dbReference type="GO" id="GO:0045672">
    <property type="term" value="P:positive regulation of osteoclast differentiation"/>
    <property type="evidence" value="ECO:0000314"/>
    <property type="project" value="RGD"/>
</dbReference>
<dbReference type="GO" id="GO:0051897">
    <property type="term" value="P:positive regulation of phosphatidylinositol 3-kinase/protein kinase B signal transduction"/>
    <property type="evidence" value="ECO:0000266"/>
    <property type="project" value="RGD"/>
</dbReference>
<dbReference type="GO" id="GO:0045944">
    <property type="term" value="P:positive regulation of transcription by RNA polymerase II"/>
    <property type="evidence" value="ECO:0000266"/>
    <property type="project" value="RGD"/>
</dbReference>
<dbReference type="GO" id="GO:0032760">
    <property type="term" value="P:positive regulation of tumor necrosis factor production"/>
    <property type="evidence" value="ECO:0000250"/>
    <property type="project" value="UniProtKB"/>
</dbReference>
<dbReference type="GO" id="GO:0050795">
    <property type="term" value="P:regulation of behavior"/>
    <property type="evidence" value="ECO:0000250"/>
    <property type="project" value="UniProtKB"/>
</dbReference>
<dbReference type="GO" id="GO:0008360">
    <property type="term" value="P:regulation of cell shape"/>
    <property type="evidence" value="ECO:0000250"/>
    <property type="project" value="UniProtKB"/>
</dbReference>
<dbReference type="GO" id="GO:0043067">
    <property type="term" value="P:regulation of programmed cell death"/>
    <property type="evidence" value="ECO:0000315"/>
    <property type="project" value="RGD"/>
</dbReference>
<dbReference type="GO" id="GO:0051930">
    <property type="term" value="P:regulation of sensory perception of pain"/>
    <property type="evidence" value="ECO:0000250"/>
    <property type="project" value="UniProtKB"/>
</dbReference>
<dbReference type="GO" id="GO:0014808">
    <property type="term" value="P:release of sequestered calcium ion into cytosol by sarcoplasmic reticulum"/>
    <property type="evidence" value="ECO:0000250"/>
    <property type="project" value="UniProtKB"/>
</dbReference>
<dbReference type="GO" id="GO:0070723">
    <property type="term" value="P:response to cholesterol"/>
    <property type="evidence" value="ECO:0000250"/>
    <property type="project" value="UniProtKB"/>
</dbReference>
<dbReference type="GO" id="GO:0009636">
    <property type="term" value="P:response to toxic substance"/>
    <property type="evidence" value="ECO:0000250"/>
    <property type="project" value="UniProtKB"/>
</dbReference>
<dbReference type="GO" id="GO:0009410">
    <property type="term" value="P:response to xenobiotic stimulus"/>
    <property type="evidence" value="ECO:0000270"/>
    <property type="project" value="RGD"/>
</dbReference>
<dbReference type="GO" id="GO:0023052">
    <property type="term" value="P:signaling"/>
    <property type="evidence" value="ECO:0000250"/>
    <property type="project" value="UniProtKB"/>
</dbReference>
<dbReference type="GO" id="GO:0010818">
    <property type="term" value="P:T cell chemotaxis"/>
    <property type="evidence" value="ECO:0000250"/>
    <property type="project" value="UniProtKB"/>
</dbReference>
<dbReference type="CDD" id="cd00272">
    <property type="entry name" value="Chemokine_CC"/>
    <property type="match status" value="1"/>
</dbReference>
<dbReference type="FunFam" id="2.40.50.40:FF:000002">
    <property type="entry name" value="C-C motif chemokine"/>
    <property type="match status" value="1"/>
</dbReference>
<dbReference type="Gene3D" id="2.40.50.40">
    <property type="match status" value="1"/>
</dbReference>
<dbReference type="InterPro" id="IPR039809">
    <property type="entry name" value="Chemokine_b/g/d"/>
</dbReference>
<dbReference type="InterPro" id="IPR000827">
    <property type="entry name" value="Chemokine_CC_CS"/>
</dbReference>
<dbReference type="InterPro" id="IPR001811">
    <property type="entry name" value="Chemokine_IL8-like_dom"/>
</dbReference>
<dbReference type="InterPro" id="IPR036048">
    <property type="entry name" value="Interleukin_8-like_sf"/>
</dbReference>
<dbReference type="PANTHER" id="PTHR12015:SF183">
    <property type="entry name" value="C-C MOTIF CHEMOKINE 3"/>
    <property type="match status" value="1"/>
</dbReference>
<dbReference type="PANTHER" id="PTHR12015">
    <property type="entry name" value="SMALL INDUCIBLE CYTOKINE A"/>
    <property type="match status" value="1"/>
</dbReference>
<dbReference type="Pfam" id="PF00048">
    <property type="entry name" value="IL8"/>
    <property type="match status" value="1"/>
</dbReference>
<dbReference type="SMART" id="SM00199">
    <property type="entry name" value="SCY"/>
    <property type="match status" value="1"/>
</dbReference>
<dbReference type="SUPFAM" id="SSF54117">
    <property type="entry name" value="Interleukin 8-like chemokines"/>
    <property type="match status" value="1"/>
</dbReference>
<dbReference type="PROSITE" id="PS00472">
    <property type="entry name" value="SMALL_CYTOKINES_CC"/>
    <property type="match status" value="1"/>
</dbReference>
<evidence type="ECO:0000250" key="1">
    <source>
        <dbReference type="UniProtKB" id="P10147"/>
    </source>
</evidence>
<evidence type="ECO:0000269" key="2">
    <source>
    </source>
</evidence>
<evidence type="ECO:0000305" key="3"/>
<keyword id="KW-0145">Chemotaxis</keyword>
<keyword id="KW-0202">Cytokine</keyword>
<keyword id="KW-0903">Direct protein sequencing</keyword>
<keyword id="KW-1015">Disulfide bond</keyword>
<keyword id="KW-0358">Heparin-binding</keyword>
<keyword id="KW-0395">Inflammatory response</keyword>
<keyword id="KW-1185">Reference proteome</keyword>
<keyword id="KW-0964">Secreted</keyword>
<keyword id="KW-0732">Signal</keyword>
<sequence length="92" mass="10335">MKVSTAALAVLLCTMALWNEVFSAPYGADTPTACCFSYGRQIPRKFIADYFETSSLCSQPGVIFLTKRNRQICADPKETWVQEYITELELNA</sequence>
<reference key="1">
    <citation type="journal article" date="1995" name="Biochem. Biophys. Res. Commun.">
        <title>Molecular cloning and posttranscriptional regulation of macrophage inflammatory protein-1 alpha in alveolar macrophages.</title>
        <authorList>
            <person name="Shi M.M."/>
            <person name="Godleski J.J."/>
            <person name="Paulauskis J.D."/>
        </authorList>
    </citation>
    <scope>NUCLEOTIDE SEQUENCE [MRNA]</scope>
    <source>
        <tissue>Lung</tissue>
    </source>
</reference>
<reference key="2">
    <citation type="journal article" date="1995" name="J. Immunol.">
        <title>Role of macrophage inflammatory protein-1 alpha (MIP-1 alpha) in acute lung injury in rats.</title>
        <authorList>
            <person name="Shanley T.P."/>
            <person name="Schmal H."/>
            <person name="Friedl H.P."/>
            <person name="Jones M.L."/>
            <person name="Ward P.A."/>
        </authorList>
    </citation>
    <scope>NUCLEOTIDE SEQUENCE [MRNA]</scope>
    <source>
        <strain>Long Evans</strain>
        <tissue>Lung</tissue>
    </source>
</reference>
<reference key="3">
    <citation type="journal article" date="2007" name="Genomics">
        <title>Fine-mapping and comprehensive transcript analysis reveals nonsynonymous variants within a novel 1.17 Mb blood pressure QTL region on rat chromosome 10.</title>
        <authorList>
            <person name="Saad Y."/>
            <person name="Garrett M.R."/>
            <person name="Manickavasagam E."/>
            <person name="Yerga-Woolwine S."/>
            <person name="Farms P."/>
            <person name="Radecki T."/>
            <person name="Joe B."/>
        </authorList>
    </citation>
    <scope>NUCLEOTIDE SEQUENCE [MRNA]</scope>
    <source>
        <strain>Dahl salt-sensitive</strain>
        <strain>Lewis</strain>
    </source>
</reference>
<reference key="4">
    <citation type="journal article" date="1996" name="Biochem. Biophys. Res. Commun.">
        <title>Cytokine-induced neutrophil chemoattractant (CINC)-2 alpha, a novel member of rat GRO/CINCs, is a predominant chemokine produced by lipopolysaccharide-stimulated rat macrophages in culture.</title>
        <authorList>
            <person name="Nakagawa H."/>
            <person name="Shiota S."/>
            <person name="Takano K."/>
            <person name="Shibata F."/>
            <person name="Kato H."/>
        </authorList>
    </citation>
    <scope>PROTEIN SEQUENCE OF 24-57</scope>
    <source>
        <strain>Wistar</strain>
    </source>
</reference>
<feature type="signal peptide" evidence="2">
    <location>
        <begin position="1"/>
        <end position="23"/>
    </location>
</feature>
<feature type="chain" id="PRO_0000005160" description="C-C motif chemokine 3">
    <location>
        <begin position="24"/>
        <end position="92"/>
    </location>
</feature>
<feature type="disulfide bond" evidence="1">
    <location>
        <begin position="34"/>
        <end position="57"/>
    </location>
</feature>
<feature type="disulfide bond" evidence="1">
    <location>
        <begin position="35"/>
        <end position="73"/>
    </location>
</feature>
<feature type="sequence conflict" description="In Ref. 2; AAA96498." evidence="3" ref="2">
    <original>A</original>
    <variation>T</variation>
    <location>
        <position position="6"/>
    </location>
</feature>
<feature type="sequence conflict" description="In Ref. 2; AAA96498 and 4; AA sequence." evidence="3" ref="2 4">
    <original>C</original>
    <variation>W</variation>
    <location>
        <position position="57"/>
    </location>
</feature>
<organism>
    <name type="scientific">Rattus norvegicus</name>
    <name type="common">Rat</name>
    <dbReference type="NCBI Taxonomy" id="10116"/>
    <lineage>
        <taxon>Eukaryota</taxon>
        <taxon>Metazoa</taxon>
        <taxon>Chordata</taxon>
        <taxon>Craniata</taxon>
        <taxon>Vertebrata</taxon>
        <taxon>Euteleostomi</taxon>
        <taxon>Mammalia</taxon>
        <taxon>Eutheria</taxon>
        <taxon>Euarchontoglires</taxon>
        <taxon>Glires</taxon>
        <taxon>Rodentia</taxon>
        <taxon>Myomorpha</taxon>
        <taxon>Muroidea</taxon>
        <taxon>Muridae</taxon>
        <taxon>Murinae</taxon>
        <taxon>Rattus</taxon>
    </lineage>
</organism>